<gene>
    <name type="primary">mch2</name>
</gene>
<evidence type="ECO:0000250" key="1"/>
<evidence type="ECO:0000255" key="2"/>
<evidence type="ECO:0000305" key="3"/>
<accession>P69156</accession>
<accession>P01208</accession>
<accession>P19714</accession>
<name>MCH2_ONCTS</name>
<keyword id="KW-0165">Cleavage on pair of basic residues</keyword>
<keyword id="KW-1015">Disulfide bond</keyword>
<keyword id="KW-0372">Hormone</keyword>
<keyword id="KW-0527">Neuropeptide</keyword>
<keyword id="KW-1185">Reference proteome</keyword>
<keyword id="KW-0732">Signal</keyword>
<organism>
    <name type="scientific">Oncorhynchus tshawytscha</name>
    <name type="common">Chinook salmon</name>
    <name type="synonym">Salmo tshawytscha</name>
    <dbReference type="NCBI Taxonomy" id="74940"/>
    <lineage>
        <taxon>Eukaryota</taxon>
        <taxon>Metazoa</taxon>
        <taxon>Chordata</taxon>
        <taxon>Craniata</taxon>
        <taxon>Vertebrata</taxon>
        <taxon>Euteleostomi</taxon>
        <taxon>Actinopterygii</taxon>
        <taxon>Neopterygii</taxon>
        <taxon>Teleostei</taxon>
        <taxon>Protacanthopterygii</taxon>
        <taxon>Salmoniformes</taxon>
        <taxon>Salmonidae</taxon>
        <taxon>Salmoninae</taxon>
        <taxon>Oncorhynchus</taxon>
    </lineage>
</organism>
<reference key="1">
    <citation type="journal article" date="1989" name="Proc. Natl. Acad. Sci. U.S.A.">
        <title>Two precursors of melanin-concentrating hormone: DNA sequence analysis and in situ immunochemical localization.</title>
        <authorList>
            <person name="Minth C.A."/>
            <person name="Qiu H."/>
            <person name="Akil H."/>
            <person name="Watson S.J."/>
            <person name="Dixon J.E."/>
        </authorList>
    </citation>
    <scope>NUCLEOTIDE SEQUENCE [MRNA]</scope>
</reference>
<proteinExistence type="evidence at transcript level"/>
<protein>
    <recommendedName>
        <fullName>Pro-MCH 2</fullName>
    </recommendedName>
    <component>
        <recommendedName>
            <fullName>Neuropeptide-glutamic acid-valine</fullName>
        </recommendedName>
        <alternativeName>
            <fullName>Neuropeptide E-V</fullName>
            <shortName>NEV</shortName>
        </alternativeName>
    </component>
    <component>
        <recommendedName>
            <fullName>Melanin-concentrating hormone</fullName>
            <shortName>MCH</shortName>
        </recommendedName>
    </component>
</protein>
<feature type="signal peptide" evidence="2">
    <location>
        <begin position="1"/>
        <end position="24"/>
    </location>
</feature>
<feature type="chain" id="PRO_0000019138" description="Pro-MCH 2">
    <location>
        <begin position="25"/>
        <end position="132"/>
    </location>
</feature>
<feature type="peptide" id="PRO_0000019139" description="Neuropeptide-glutamic acid-valine" evidence="2">
    <location>
        <begin position="101"/>
        <end position="113"/>
    </location>
</feature>
<feature type="peptide" id="PRO_0000019140" description="Melanin-concentrating hormone">
    <location>
        <begin position="116"/>
        <end position="132"/>
    </location>
</feature>
<feature type="disulfide bond" evidence="1">
    <location>
        <begin position="120"/>
        <end position="129"/>
    </location>
</feature>
<sequence>MRDSVLSVIFALALFLECYTPSMAIPMGKMEDTALEQDTLDSLLNEEVADKNPDSVRSGSSKIIVLADSGMWKNLNRGLPLYKLKAAAAGLDRALTLDRREADQDLSPSISIVRRDTMRCMVGRVYRPCWEV</sequence>
<dbReference type="EMBL" id="M25754">
    <property type="protein sequence ID" value="AAA49422.1"/>
    <property type="molecule type" value="mRNA"/>
</dbReference>
<dbReference type="PIR" id="A32910">
    <property type="entry name" value="A32910"/>
</dbReference>
<dbReference type="Proteomes" id="UP000694402">
    <property type="component" value="Unplaced"/>
</dbReference>
<dbReference type="GO" id="GO:0045202">
    <property type="term" value="C:synapse"/>
    <property type="evidence" value="ECO:0007669"/>
    <property type="project" value="GOC"/>
</dbReference>
<dbReference type="GO" id="GO:0030354">
    <property type="term" value="F:melanin-concentrating hormone activity"/>
    <property type="evidence" value="ECO:0007669"/>
    <property type="project" value="InterPro"/>
</dbReference>
<dbReference type="GO" id="GO:0031777">
    <property type="term" value="F:type 1 melanin-concentrating hormone receptor binding"/>
    <property type="evidence" value="ECO:0007669"/>
    <property type="project" value="TreeGrafter"/>
</dbReference>
<dbReference type="GO" id="GO:0007268">
    <property type="term" value="P:chemical synaptic transmission"/>
    <property type="evidence" value="ECO:0007669"/>
    <property type="project" value="InterPro"/>
</dbReference>
<dbReference type="GO" id="GO:0007218">
    <property type="term" value="P:neuropeptide signaling pathway"/>
    <property type="evidence" value="ECO:0007669"/>
    <property type="project" value="UniProtKB-KW"/>
</dbReference>
<dbReference type="InterPro" id="IPR005456">
    <property type="entry name" value="Prepro-melanin_conc_hormone"/>
</dbReference>
<dbReference type="PANTHER" id="PTHR12091">
    <property type="entry name" value="MELANIN-CONCENTRATING HORMONE"/>
    <property type="match status" value="1"/>
</dbReference>
<dbReference type="PANTHER" id="PTHR12091:SF0">
    <property type="entry name" value="PRO-MCH"/>
    <property type="match status" value="1"/>
</dbReference>
<dbReference type="Pfam" id="PF05824">
    <property type="entry name" value="Pro-MCH"/>
    <property type="match status" value="1"/>
</dbReference>
<dbReference type="PRINTS" id="PR01641">
    <property type="entry name" value="PROMCHFAMILY"/>
</dbReference>
<comment type="function">
    <text>Plays a role in skin pigmentation by antagonizing the action of melanotropin alpha. Induces melanin concentration within the melanophores. May participate in the control of the hypothalamo-pituitary adrenal gland axis by inhibiting the release of ACTH.</text>
</comment>
<comment type="tissue specificity">
    <text>Pituitary gland. Produced in neurons of lateral basal hypothalamus which project both to the brain and to the neural lobe of the pituitary gland from where MCH is released.</text>
</comment>
<comment type="similarity">
    <text evidence="3">Belongs to the melanin-concentrating hormone family.</text>
</comment>